<gene>
    <name type="primary">EZH1</name>
</gene>
<keyword id="KW-0156">Chromatin regulator</keyword>
<keyword id="KW-1017">Isopeptide bond</keyword>
<keyword id="KW-0489">Methyltransferase</keyword>
<keyword id="KW-0539">Nucleus</keyword>
<keyword id="KW-1185">Reference proteome</keyword>
<keyword id="KW-0678">Repressor</keyword>
<keyword id="KW-0949">S-adenosyl-L-methionine</keyword>
<keyword id="KW-0804">Transcription</keyword>
<keyword id="KW-0805">Transcription regulation</keyword>
<keyword id="KW-0808">Transferase</keyword>
<keyword id="KW-0832">Ubl conjugation</keyword>
<evidence type="ECO:0000250" key="1"/>
<evidence type="ECO:0000250" key="2">
    <source>
        <dbReference type="UniProtKB" id="Q92800"/>
    </source>
</evidence>
<evidence type="ECO:0000255" key="3"/>
<evidence type="ECO:0000255" key="4">
    <source>
        <dbReference type="PROSITE-ProRule" id="PRU00190"/>
    </source>
</evidence>
<evidence type="ECO:0000255" key="5">
    <source>
        <dbReference type="PROSITE-ProRule" id="PRU00970"/>
    </source>
</evidence>
<evidence type="ECO:0000256" key="6">
    <source>
        <dbReference type="SAM" id="MobiDB-lite"/>
    </source>
</evidence>
<dbReference type="EC" id="2.1.1.356" evidence="2"/>
<dbReference type="EMBL" id="CR857825">
    <property type="protein sequence ID" value="CAH90081.1"/>
    <property type="molecule type" value="mRNA"/>
</dbReference>
<dbReference type="RefSeq" id="NP_001124996.1">
    <property type="nucleotide sequence ID" value="NM_001131524.1"/>
</dbReference>
<dbReference type="SMR" id="Q5RDS6"/>
<dbReference type="FunCoup" id="Q5RDS6">
    <property type="interactions" value="2613"/>
</dbReference>
<dbReference type="STRING" id="9601.ENSPPYP00000023752"/>
<dbReference type="GeneID" id="100171872"/>
<dbReference type="KEGG" id="pon:100171872"/>
<dbReference type="CTD" id="2145"/>
<dbReference type="eggNOG" id="KOG1079">
    <property type="taxonomic scope" value="Eukaryota"/>
</dbReference>
<dbReference type="InParanoid" id="Q5RDS6"/>
<dbReference type="OrthoDB" id="6141102at2759"/>
<dbReference type="Proteomes" id="UP000001595">
    <property type="component" value="Unplaced"/>
</dbReference>
<dbReference type="GO" id="GO:0035098">
    <property type="term" value="C:ESC/E(Z) complex"/>
    <property type="evidence" value="ECO:0000250"/>
    <property type="project" value="UniProtKB"/>
</dbReference>
<dbReference type="GO" id="GO:0003682">
    <property type="term" value="F:chromatin binding"/>
    <property type="evidence" value="ECO:0007669"/>
    <property type="project" value="TreeGrafter"/>
</dbReference>
<dbReference type="GO" id="GO:0140951">
    <property type="term" value="F:histone H3K27 trimethyltransferase activity"/>
    <property type="evidence" value="ECO:0007669"/>
    <property type="project" value="UniProtKB-EC"/>
</dbReference>
<dbReference type="GO" id="GO:0031507">
    <property type="term" value="P:heterochromatin formation"/>
    <property type="evidence" value="ECO:0007669"/>
    <property type="project" value="TreeGrafter"/>
</dbReference>
<dbReference type="GO" id="GO:0032259">
    <property type="term" value="P:methylation"/>
    <property type="evidence" value="ECO:0007669"/>
    <property type="project" value="UniProtKB-KW"/>
</dbReference>
<dbReference type="CDD" id="cd00167">
    <property type="entry name" value="SANT"/>
    <property type="match status" value="1"/>
</dbReference>
<dbReference type="CDD" id="cd19217">
    <property type="entry name" value="SET_EZH1"/>
    <property type="match status" value="1"/>
</dbReference>
<dbReference type="FunFam" id="2.170.270.10:FF:000001">
    <property type="entry name" value="Putative histone-lysine N-methyltransferase EZH2"/>
    <property type="match status" value="1"/>
</dbReference>
<dbReference type="Gene3D" id="2.170.270.10">
    <property type="entry name" value="SET domain"/>
    <property type="match status" value="1"/>
</dbReference>
<dbReference type="InterPro" id="IPR026489">
    <property type="entry name" value="CXC_dom"/>
</dbReference>
<dbReference type="InterPro" id="IPR045318">
    <property type="entry name" value="EZH1/2-like"/>
</dbReference>
<dbReference type="InterPro" id="IPR048358">
    <property type="entry name" value="EZH1/2_MCSS"/>
</dbReference>
<dbReference type="InterPro" id="IPR021654">
    <property type="entry name" value="EZH1/EZH2"/>
</dbReference>
<dbReference type="InterPro" id="IPR044438">
    <property type="entry name" value="EZH1_SET"/>
</dbReference>
<dbReference type="InterPro" id="IPR041343">
    <property type="entry name" value="PRC2_HTH_1"/>
</dbReference>
<dbReference type="InterPro" id="IPR041355">
    <property type="entry name" value="Pre-SET_CXC"/>
</dbReference>
<dbReference type="InterPro" id="IPR001005">
    <property type="entry name" value="SANT/Myb"/>
</dbReference>
<dbReference type="InterPro" id="IPR001214">
    <property type="entry name" value="SET_dom"/>
</dbReference>
<dbReference type="InterPro" id="IPR046341">
    <property type="entry name" value="SET_dom_sf"/>
</dbReference>
<dbReference type="InterPro" id="IPR033467">
    <property type="entry name" value="Tesmin/TSO1-like_CXC"/>
</dbReference>
<dbReference type="PANTHER" id="PTHR45747">
    <property type="entry name" value="HISTONE-LYSINE N-METHYLTRANSFERASE E(Z)"/>
    <property type="match status" value="1"/>
</dbReference>
<dbReference type="PANTHER" id="PTHR45747:SF1">
    <property type="entry name" value="HISTONE-LYSINE N-METHYLTRANSFERASE EZH1"/>
    <property type="match status" value="1"/>
</dbReference>
<dbReference type="Pfam" id="PF21358">
    <property type="entry name" value="Ezh2_MCSS"/>
    <property type="match status" value="1"/>
</dbReference>
<dbReference type="Pfam" id="PF11616">
    <property type="entry name" value="EZH2_WD-Binding"/>
    <property type="match status" value="1"/>
</dbReference>
<dbReference type="Pfam" id="PF18118">
    <property type="entry name" value="PRC2_HTH_1"/>
    <property type="match status" value="1"/>
</dbReference>
<dbReference type="Pfam" id="PF18264">
    <property type="entry name" value="preSET_CXC"/>
    <property type="match status" value="1"/>
</dbReference>
<dbReference type="Pfam" id="PF00856">
    <property type="entry name" value="SET"/>
    <property type="match status" value="1"/>
</dbReference>
<dbReference type="SMART" id="SM01114">
    <property type="entry name" value="CXC"/>
    <property type="match status" value="1"/>
</dbReference>
<dbReference type="SMART" id="SM00717">
    <property type="entry name" value="SANT"/>
    <property type="match status" value="2"/>
</dbReference>
<dbReference type="SMART" id="SM00317">
    <property type="entry name" value="SET"/>
    <property type="match status" value="1"/>
</dbReference>
<dbReference type="SUPFAM" id="SSF82199">
    <property type="entry name" value="SET domain"/>
    <property type="match status" value="1"/>
</dbReference>
<dbReference type="PROSITE" id="PS51633">
    <property type="entry name" value="CXC"/>
    <property type="match status" value="1"/>
</dbReference>
<dbReference type="PROSITE" id="PS50280">
    <property type="entry name" value="SET"/>
    <property type="match status" value="1"/>
</dbReference>
<sequence length="747" mass="85253">MEIPNPPTSKCITYWKRKVKSEYMRLRQLKRLQANMGAKALYVANFAKVQEKTQILNEEWKKLRVQPVQSMKPVCGHPFLKKCTIESIFPGFASQHMLMRSLNTVALVPIMYSWSPLQQNFMVEDETVLCNIPYMGDEVKEEDETFIEELINNYDGKVHGEEEMIPGSVLISDAVFLELVDALNQYSDEEEEGHNDTSDGKQDDSKEDLPVTRKRKRHAIEGNKKSSKKQFPNDMIFSAIASMFPENGVPDDMKERYRELTEMSDPNALPPQCTPNIDGPNAKSVQREQSLHSFHTLFCRRCFKYDCFLHPFHATPNVYKRKNKEIKIEPEPCGTDCFLLLEGAKEYAMLHNPRSKCSGRRRRRHHIVSASCSNASASAVAETKEGDSDRDTGNDWASSSSEANSRCQTPTKQKASPAPPQLCVVEAPSEPVEWTGAEESLFRVFHGTYFNNFCSIARLLGTKTCKQVFQFAVKESLILKLPTDELMNPSQKKKRKHRLWAAHCRKIQLKKDNSSTQVYNYQPCDHPDRPCDSTCPCIMTQNFCEKFCQCNPDCQNRFPGCRCKTQCNTKQCPCYLAVRECDPDLCLTCGASEHWDCKVVSCKNCSIQRGLKKHLLLAPSDVAGWGTFIKESVQKNEFISEYCGELISQDEADRRGKVYDKYMSSFLFNLNNDFVVDATRKGNKIRFANHSVNPNCYAKVVMVNGDHRIGIFAKRAIQAGEELFLDYRYSQADALKYVGIERETDVL</sequence>
<organism>
    <name type="scientific">Pongo abelii</name>
    <name type="common">Sumatran orangutan</name>
    <name type="synonym">Pongo pygmaeus abelii</name>
    <dbReference type="NCBI Taxonomy" id="9601"/>
    <lineage>
        <taxon>Eukaryota</taxon>
        <taxon>Metazoa</taxon>
        <taxon>Chordata</taxon>
        <taxon>Craniata</taxon>
        <taxon>Vertebrata</taxon>
        <taxon>Euteleostomi</taxon>
        <taxon>Mammalia</taxon>
        <taxon>Eutheria</taxon>
        <taxon>Euarchontoglires</taxon>
        <taxon>Primates</taxon>
        <taxon>Haplorrhini</taxon>
        <taxon>Catarrhini</taxon>
        <taxon>Hominidae</taxon>
        <taxon>Pongo</taxon>
    </lineage>
</organism>
<reference key="1">
    <citation type="submission" date="2004-11" db="EMBL/GenBank/DDBJ databases">
        <authorList>
            <consortium name="The German cDNA consortium"/>
        </authorList>
    </citation>
    <scope>NUCLEOTIDE SEQUENCE [LARGE SCALE MRNA]</scope>
    <source>
        <tissue>Kidney</tissue>
    </source>
</reference>
<accession>Q5RDS6</accession>
<comment type="function">
    <text evidence="2">Polycomb group (PcG) protein. Catalytic subunit of the PRC2/EED-EZH1 complex, which methylates 'Lys-27' of histone H3, leading to transcriptional repression of the affected target gene. Able to mono-, di- and trimethylate 'Lys-27' of histone H3 to form H3K27me1, H3K27me2 and H3K27me3, respectively. Required for embryonic stem cell derivation and self-renewal, suggesting that it is involved in safeguarding embryonic stem cell identity. Compared to EZH2-containing complexes, it is less abundant in embryonic stem cells, has weak methyltransferase activity and plays a less critical role in forming H3K27me3, which is required for embryonic stem cell identity and proper differentiation.</text>
</comment>
<comment type="catalytic activity">
    <reaction evidence="2">
        <text>L-lysyl(27)-[histone H3] + 3 S-adenosyl-L-methionine = N(6),N(6),N(6)-trimethyl-L-lysyl(27)-[histone H3] + 3 S-adenosyl-L-homocysteine + 3 H(+)</text>
        <dbReference type="Rhea" id="RHEA:60292"/>
        <dbReference type="Rhea" id="RHEA-COMP:15535"/>
        <dbReference type="Rhea" id="RHEA-COMP:15548"/>
        <dbReference type="ChEBI" id="CHEBI:15378"/>
        <dbReference type="ChEBI" id="CHEBI:29969"/>
        <dbReference type="ChEBI" id="CHEBI:57856"/>
        <dbReference type="ChEBI" id="CHEBI:59789"/>
        <dbReference type="ChEBI" id="CHEBI:61961"/>
        <dbReference type="EC" id="2.1.1.356"/>
    </reaction>
</comment>
<comment type="subunit">
    <text evidence="2">Component of the PRC2/EED-EZH1 complex, which includes EED, EZH1, SUZ12, RBBP4 and AEBP2. The PRC2/EED-EZH1 is less abundant than the PRC2/EED-EZH2 complex, has weak methyltransferase activity and compacts chromatin in the absence of the methyltransferase cofactor S-adenosyl-L-methionine (SAM). Interacts with EZHIP; the interaction blocks EZH1 methyltransferase activity.</text>
</comment>
<comment type="subcellular location">
    <subcellularLocation>
        <location evidence="2">Nucleus</location>
    </subcellularLocation>
    <text evidence="1">Colocalizes with trimethylated 'Lys-27' of histone H3.</text>
</comment>
<comment type="similarity">
    <text evidence="4">Belongs to the class V-like SAM-binding methyltransferase superfamily. Histone-lysine methyltransferase family. EZ subfamily.</text>
</comment>
<protein>
    <recommendedName>
        <fullName>Histone-lysine N-methyltransferase EZH1</fullName>
        <ecNumber evidence="2">2.1.1.356</ecNumber>
    </recommendedName>
    <alternativeName>
        <fullName>Enhancer of zeste homolog 1</fullName>
    </alternativeName>
</protein>
<feature type="chain" id="PRO_0000323740" description="Histone-lysine N-methyltransferase EZH1">
    <location>
        <begin position="1"/>
        <end position="747"/>
    </location>
</feature>
<feature type="domain" description="CXC" evidence="5">
    <location>
        <begin position="504"/>
        <end position="606"/>
    </location>
</feature>
<feature type="domain" description="SET" evidence="4">
    <location>
        <begin position="613"/>
        <end position="728"/>
    </location>
</feature>
<feature type="region of interest" description="Disordered" evidence="6">
    <location>
        <begin position="188"/>
        <end position="231"/>
    </location>
</feature>
<feature type="region of interest" description="Disordered" evidence="6">
    <location>
        <begin position="378"/>
        <end position="421"/>
    </location>
</feature>
<feature type="short sequence motif" description="Nuclear localization signal" evidence="3">
    <location>
        <begin position="491"/>
        <end position="496"/>
    </location>
</feature>
<feature type="compositionally biased region" description="Basic and acidic residues" evidence="6">
    <location>
        <begin position="194"/>
        <end position="211"/>
    </location>
</feature>
<feature type="compositionally biased region" description="Basic and acidic residues" evidence="6">
    <location>
        <begin position="382"/>
        <end position="393"/>
    </location>
</feature>
<feature type="compositionally biased region" description="Polar residues" evidence="6">
    <location>
        <begin position="395"/>
        <end position="414"/>
    </location>
</feature>
<feature type="cross-link" description="Glycyl lysine isopeptide (Lys-Gly) (interchain with G-Cter in SUMO2)" evidence="2">
    <location>
        <position position="327"/>
    </location>
</feature>
<name>EZH1_PONAB</name>
<proteinExistence type="evidence at transcript level"/>